<gene>
    <name evidence="1" type="primary">smpB</name>
    <name type="ordered locus">lp_0799</name>
</gene>
<keyword id="KW-0963">Cytoplasm</keyword>
<keyword id="KW-1185">Reference proteome</keyword>
<keyword id="KW-0694">RNA-binding</keyword>
<organism>
    <name type="scientific">Lactiplantibacillus plantarum (strain ATCC BAA-793 / NCIMB 8826 / WCFS1)</name>
    <name type="common">Lactobacillus plantarum</name>
    <dbReference type="NCBI Taxonomy" id="220668"/>
    <lineage>
        <taxon>Bacteria</taxon>
        <taxon>Bacillati</taxon>
        <taxon>Bacillota</taxon>
        <taxon>Bacilli</taxon>
        <taxon>Lactobacillales</taxon>
        <taxon>Lactobacillaceae</taxon>
        <taxon>Lactiplantibacillus</taxon>
    </lineage>
</organism>
<protein>
    <recommendedName>
        <fullName evidence="1">SsrA-binding protein</fullName>
    </recommendedName>
    <alternativeName>
        <fullName evidence="1">Small protein B</fullName>
    </alternativeName>
</protein>
<sequence length="156" mass="18071">MAKQHGKHPDTALAQNRKARHDYAVEETYEAGIALTGTEIKSVRDRRVNLKDGFVQVRNGEAWMQNVHISPFKEGNRYNVDPLRSRKLLLHKKEISKLGAATMTKGVTIIPLKMYLKHGFAKVLIGVAHGKREYDKRQDIKKREQQRQIDRVMKHY</sequence>
<evidence type="ECO:0000255" key="1">
    <source>
        <dbReference type="HAMAP-Rule" id="MF_00023"/>
    </source>
</evidence>
<name>SSRP_LACPL</name>
<accession>Q88YG7</accession>
<accession>F9UM20</accession>
<dbReference type="EMBL" id="AL935263">
    <property type="protein sequence ID" value="CCC78259.1"/>
    <property type="molecule type" value="Genomic_DNA"/>
</dbReference>
<dbReference type="RefSeq" id="WP_003641053.1">
    <property type="nucleotide sequence ID" value="NC_004567.2"/>
</dbReference>
<dbReference type="RefSeq" id="YP_004888773.1">
    <property type="nucleotide sequence ID" value="NC_004567.2"/>
</dbReference>
<dbReference type="SMR" id="Q88YG7"/>
<dbReference type="STRING" id="220668.lp_0799"/>
<dbReference type="EnsemblBacteria" id="CCC78259">
    <property type="protein sequence ID" value="CCC78259"/>
    <property type="gene ID" value="lp_0799"/>
</dbReference>
<dbReference type="GeneID" id="89668359"/>
<dbReference type="KEGG" id="lpl:lp_0799"/>
<dbReference type="PATRIC" id="fig|220668.9.peg.676"/>
<dbReference type="eggNOG" id="COG0691">
    <property type="taxonomic scope" value="Bacteria"/>
</dbReference>
<dbReference type="HOGENOM" id="CLU_108953_0_0_9"/>
<dbReference type="OrthoDB" id="9805462at2"/>
<dbReference type="PhylomeDB" id="Q88YG7"/>
<dbReference type="Proteomes" id="UP000000432">
    <property type="component" value="Chromosome"/>
</dbReference>
<dbReference type="GO" id="GO:0005829">
    <property type="term" value="C:cytosol"/>
    <property type="evidence" value="ECO:0007669"/>
    <property type="project" value="TreeGrafter"/>
</dbReference>
<dbReference type="GO" id="GO:0003723">
    <property type="term" value="F:RNA binding"/>
    <property type="evidence" value="ECO:0007669"/>
    <property type="project" value="UniProtKB-UniRule"/>
</dbReference>
<dbReference type="GO" id="GO:0070929">
    <property type="term" value="P:trans-translation"/>
    <property type="evidence" value="ECO:0007669"/>
    <property type="project" value="UniProtKB-UniRule"/>
</dbReference>
<dbReference type="CDD" id="cd09294">
    <property type="entry name" value="SmpB"/>
    <property type="match status" value="1"/>
</dbReference>
<dbReference type="Gene3D" id="2.40.280.10">
    <property type="match status" value="1"/>
</dbReference>
<dbReference type="HAMAP" id="MF_00023">
    <property type="entry name" value="SmpB"/>
    <property type="match status" value="1"/>
</dbReference>
<dbReference type="InterPro" id="IPR023620">
    <property type="entry name" value="SmpB"/>
</dbReference>
<dbReference type="InterPro" id="IPR000037">
    <property type="entry name" value="SsrA-bd_prot"/>
</dbReference>
<dbReference type="InterPro" id="IPR020081">
    <property type="entry name" value="SsrA-bd_prot_CS"/>
</dbReference>
<dbReference type="NCBIfam" id="NF003843">
    <property type="entry name" value="PRK05422.1"/>
    <property type="match status" value="1"/>
</dbReference>
<dbReference type="NCBIfam" id="TIGR00086">
    <property type="entry name" value="smpB"/>
    <property type="match status" value="1"/>
</dbReference>
<dbReference type="PANTHER" id="PTHR30308:SF2">
    <property type="entry name" value="SSRA-BINDING PROTEIN"/>
    <property type="match status" value="1"/>
</dbReference>
<dbReference type="PANTHER" id="PTHR30308">
    <property type="entry name" value="TMRNA-BINDING COMPONENT OF TRANS-TRANSLATION TAGGING COMPLEX"/>
    <property type="match status" value="1"/>
</dbReference>
<dbReference type="Pfam" id="PF01668">
    <property type="entry name" value="SmpB"/>
    <property type="match status" value="1"/>
</dbReference>
<dbReference type="SUPFAM" id="SSF74982">
    <property type="entry name" value="Small protein B (SmpB)"/>
    <property type="match status" value="1"/>
</dbReference>
<dbReference type="PROSITE" id="PS01317">
    <property type="entry name" value="SSRP"/>
    <property type="match status" value="1"/>
</dbReference>
<proteinExistence type="inferred from homology"/>
<reference key="1">
    <citation type="journal article" date="2003" name="Proc. Natl. Acad. Sci. U.S.A.">
        <title>Complete genome sequence of Lactobacillus plantarum WCFS1.</title>
        <authorList>
            <person name="Kleerebezem M."/>
            <person name="Boekhorst J."/>
            <person name="van Kranenburg R."/>
            <person name="Molenaar D."/>
            <person name="Kuipers O.P."/>
            <person name="Leer R."/>
            <person name="Tarchini R."/>
            <person name="Peters S.A."/>
            <person name="Sandbrink H.M."/>
            <person name="Fiers M.W.E.J."/>
            <person name="Stiekema W."/>
            <person name="Klein Lankhorst R.M."/>
            <person name="Bron P.A."/>
            <person name="Hoffer S.M."/>
            <person name="Nierop Groot M.N."/>
            <person name="Kerkhoven R."/>
            <person name="De Vries M."/>
            <person name="Ursing B."/>
            <person name="De Vos W.M."/>
            <person name="Siezen R.J."/>
        </authorList>
    </citation>
    <scope>NUCLEOTIDE SEQUENCE [LARGE SCALE GENOMIC DNA]</scope>
    <source>
        <strain>ATCC BAA-793 / NCIMB 8826 / WCFS1</strain>
    </source>
</reference>
<reference key="2">
    <citation type="journal article" date="2012" name="J. Bacteriol.">
        <title>Complete resequencing and reannotation of the Lactobacillus plantarum WCFS1 genome.</title>
        <authorList>
            <person name="Siezen R.J."/>
            <person name="Francke C."/>
            <person name="Renckens B."/>
            <person name="Boekhorst J."/>
            <person name="Wels M."/>
            <person name="Kleerebezem M."/>
            <person name="van Hijum S.A."/>
        </authorList>
    </citation>
    <scope>NUCLEOTIDE SEQUENCE [LARGE SCALE GENOMIC DNA]</scope>
    <scope>GENOME REANNOTATION</scope>
    <source>
        <strain>ATCC BAA-793 / NCIMB 8826 / WCFS1</strain>
    </source>
</reference>
<comment type="function">
    <text evidence="1">Required for rescue of stalled ribosomes mediated by trans-translation. Binds to transfer-messenger RNA (tmRNA), required for stable association of tmRNA with ribosomes. tmRNA and SmpB together mimic tRNA shape, replacing the anticodon stem-loop with SmpB. tmRNA is encoded by the ssrA gene; the 2 termini fold to resemble tRNA(Ala) and it encodes a 'tag peptide', a short internal open reading frame. During trans-translation Ala-aminoacylated tmRNA acts like a tRNA, entering the A-site of stalled ribosomes, displacing the stalled mRNA. The ribosome then switches to translate the ORF on the tmRNA; the nascent peptide is terminated with the 'tag peptide' encoded by the tmRNA and targeted for degradation. The ribosome is freed to recommence translation, which seems to be the essential function of trans-translation.</text>
</comment>
<comment type="subcellular location">
    <subcellularLocation>
        <location evidence="1">Cytoplasm</location>
    </subcellularLocation>
    <text evidence="1">The tmRNA-SmpB complex associates with stalled 70S ribosomes.</text>
</comment>
<comment type="similarity">
    <text evidence="1">Belongs to the SmpB family.</text>
</comment>
<feature type="chain" id="PRO_0000102966" description="SsrA-binding protein">
    <location>
        <begin position="1"/>
        <end position="156"/>
    </location>
</feature>